<evidence type="ECO:0000250" key="1">
    <source>
        <dbReference type="UniProtKB" id="P10070"/>
    </source>
</evidence>
<evidence type="ECO:0000255" key="2">
    <source>
        <dbReference type="PROSITE-ProRule" id="PRU00042"/>
    </source>
</evidence>
<evidence type="ECO:0000256" key="3">
    <source>
        <dbReference type="SAM" id="MobiDB-lite"/>
    </source>
</evidence>
<evidence type="ECO:0000269" key="4">
    <source>
    </source>
</evidence>
<evidence type="ECO:0000269" key="5">
    <source>
    </source>
</evidence>
<evidence type="ECO:0000269" key="6">
    <source>
    </source>
</evidence>
<evidence type="ECO:0000269" key="7">
    <source>
    </source>
</evidence>
<evidence type="ECO:0000269" key="8">
    <source>
    </source>
</evidence>
<evidence type="ECO:0000269" key="9">
    <source>
    </source>
</evidence>
<evidence type="ECO:0000269" key="10">
    <source>
    </source>
</evidence>
<evidence type="ECO:0000269" key="11">
    <source>
    </source>
</evidence>
<evidence type="ECO:0000305" key="12"/>
<evidence type="ECO:0000305" key="13">
    <source>
    </source>
</evidence>
<evidence type="ECO:0000312" key="14">
    <source>
        <dbReference type="MGI" id="MGI:95728"/>
    </source>
</evidence>
<evidence type="ECO:0007744" key="15">
    <source>
    </source>
</evidence>
<comment type="function">
    <text evidence="1 5 11 13">Functions as a transcription regulator in the hedgehog (Hh) pathway (PubMed:9006072). Functions as a transcriptional activator (PubMed:10806483). May also function as transcriptional repressor (PubMed:10433919). Requires STK36 for full transcriptional activator activity (PubMed:10806483). Binds to the DNA sequence 5'-GAACCACCCA-3' which is part of the TRE-2S regulatory element (By similarity). Is involved in the smoothened (SHH) signaling pathway (PubMed:10433919). Required for normal skeleton development (PubMed:9006072).</text>
</comment>
<comment type="subunit">
    <text evidence="1 5 6 7 9 10">Interacts with ZIC1 and ZIC2 (PubMed:11238441). Interacts with STK36 (PubMed:10806483). Interacts with SUFU; this inhibits transcriptional activation mediated by GLI2 (PubMed:10806483, PubMed:23034632). Interacts (via C-terminal internal region) with FOXC1 (via N-terminus); this interaction is direct and increases GLI2 DNA-binding and transcriptional activity through a smoothened (SMO)-independent Hedgehog (Hh) signaling pathway (PubMed:25808752, PubMed:26565916).</text>
</comment>
<comment type="interaction">
    <interactant intactId="EBI-9344284">
        <id>Q0VGT2</id>
    </interactant>
    <interactant intactId="EBI-7128920">
        <id>Q6ZWS8</id>
        <label>Spop</label>
    </interactant>
    <organismsDiffer>false</organismsDiffer>
    <experiments>2</experiments>
</comment>
<comment type="interaction">
    <interactant intactId="EBI-9344284">
        <id>Q0VGT2</id>
    </interactant>
    <interactant intactId="EBI-740595">
        <id>Q9UMX1</id>
        <label>SUFU</label>
    </interactant>
    <organismsDiffer>true</organismsDiffer>
    <experiments>3</experiments>
</comment>
<comment type="subcellular location">
    <subcellularLocation>
        <location evidence="5">Nucleus</location>
    </subcellularLocation>
    <subcellularLocation>
        <location evidence="5">Cytoplasm</location>
    </subcellularLocation>
    <subcellularLocation>
        <location evidence="8">Cell projection</location>
        <location evidence="8">Cilium</location>
    </subcellularLocation>
    <text evidence="5 7">STK36 promotes translocation to the nucleus (PubMed:10806483). In keratinocytes, it is sequestered in the cytoplasm by SUFU. In the absence of SUFU, it translocates to the nucleus (PubMed:23034632).</text>
</comment>
<comment type="domain">
    <text evidence="4">The N-terminal domain confers transcriptional repressor activity, while the C-terminal domain mediates transcriptional activation.</text>
</comment>
<comment type="PTM">
    <text evidence="1">Phosphorylated in vitro by ULK3. Phosphorylated by DYRK2; this inhibits GLI2 transcription factor activity and promotes proteasomal degradation of GLI2.</text>
</comment>
<comment type="PTM">
    <text evidence="1">Acetylation at Lys-740 inhibits Hh target gene expression, probably by impeding entry into chromatin thus preventing promoter occupancy.</text>
</comment>
<comment type="disruption phenotype">
    <text evidence="11">Full embryonic lethality. Homozygous embryos are detected at the expected Mendelian rate up to about 18.5 dpc, but there are no live pups. Mutant embryos present important craniofacial defects, including defects of the medial portion of the frontal and parietal skull bones, absence of upper and/or lower incisors, often combined with a cleft palate. Besides, mutant embryos show defects in the ossification of skeletal bones and shortened limb bones.</text>
</comment>
<comment type="similarity">
    <text evidence="12">Belongs to the GLI C2H2-type zinc-finger protein family.</text>
</comment>
<name>GLI2_MOUSE</name>
<proteinExistence type="evidence at protein level"/>
<accession>Q0VGT2</accession>
<accession>E9PYJ4</accession>
<feature type="chain" id="PRO_0000406215" description="Zinc finger protein GLI2">
    <location>
        <begin position="1"/>
        <end position="1544"/>
    </location>
</feature>
<feature type="zinc finger region" description="C2H2-type 1" evidence="2">
    <location>
        <begin position="417"/>
        <end position="444"/>
    </location>
</feature>
<feature type="zinc finger region" description="C2H2-type 2; degenerate" evidence="2">
    <location>
        <begin position="455"/>
        <end position="477"/>
    </location>
</feature>
<feature type="zinc finger region" description="C2H2-type 3" evidence="2">
    <location>
        <begin position="483"/>
        <end position="507"/>
    </location>
</feature>
<feature type="zinc finger region" description="C2H2-type 4" evidence="2">
    <location>
        <begin position="513"/>
        <end position="538"/>
    </location>
</feature>
<feature type="zinc finger region" description="C2H2-type 5" evidence="2">
    <location>
        <begin position="544"/>
        <end position="569"/>
    </location>
</feature>
<feature type="region of interest" description="Disordered" evidence="3">
    <location>
        <begin position="1"/>
        <end position="26"/>
    </location>
</feature>
<feature type="region of interest" description="Disordered" evidence="3">
    <location>
        <begin position="338"/>
        <end position="364"/>
    </location>
</feature>
<feature type="region of interest" description="Disordered" evidence="3">
    <location>
        <begin position="557"/>
        <end position="619"/>
    </location>
</feature>
<feature type="region of interest" description="Disordered" evidence="3">
    <location>
        <begin position="635"/>
        <end position="682"/>
    </location>
</feature>
<feature type="region of interest" description="Disordered" evidence="3">
    <location>
        <begin position="781"/>
        <end position="800"/>
    </location>
</feature>
<feature type="region of interest" description="Disordered" evidence="3">
    <location>
        <begin position="805"/>
        <end position="861"/>
    </location>
</feature>
<feature type="region of interest" description="Disordered" evidence="3">
    <location>
        <begin position="908"/>
        <end position="963"/>
    </location>
</feature>
<feature type="region of interest" description="Disordered" evidence="3">
    <location>
        <begin position="995"/>
        <end position="1016"/>
    </location>
</feature>
<feature type="region of interest" description="Disordered" evidence="3">
    <location>
        <begin position="1166"/>
        <end position="1220"/>
    </location>
</feature>
<feature type="region of interest" description="Disordered" evidence="3">
    <location>
        <begin position="1422"/>
        <end position="1457"/>
    </location>
</feature>
<feature type="compositionally biased region" description="Basic and acidic residues" evidence="3">
    <location>
        <begin position="569"/>
        <end position="585"/>
    </location>
</feature>
<feature type="compositionally biased region" description="Low complexity" evidence="3">
    <location>
        <begin position="637"/>
        <end position="657"/>
    </location>
</feature>
<feature type="compositionally biased region" description="Polar residues" evidence="3">
    <location>
        <begin position="790"/>
        <end position="800"/>
    </location>
</feature>
<feature type="compositionally biased region" description="Polar residues" evidence="3">
    <location>
        <begin position="805"/>
        <end position="814"/>
    </location>
</feature>
<feature type="compositionally biased region" description="Basic and acidic residues" evidence="3">
    <location>
        <begin position="954"/>
        <end position="963"/>
    </location>
</feature>
<feature type="compositionally biased region" description="Polar residues" evidence="3">
    <location>
        <begin position="997"/>
        <end position="1009"/>
    </location>
</feature>
<feature type="compositionally biased region" description="Polar residues" evidence="3">
    <location>
        <begin position="1173"/>
        <end position="1190"/>
    </location>
</feature>
<feature type="compositionally biased region" description="Polar residues" evidence="3">
    <location>
        <begin position="1200"/>
        <end position="1209"/>
    </location>
</feature>
<feature type="modified residue" description="Phosphoserine" evidence="1">
    <location>
        <position position="145"/>
    </location>
</feature>
<feature type="modified residue" description="Phosphoserine" evidence="1">
    <location>
        <position position="230"/>
    </location>
</feature>
<feature type="modified residue" description="Phosphoserine" evidence="1">
    <location>
        <position position="232"/>
    </location>
</feature>
<feature type="modified residue" description="Phosphoserine" evidence="1">
    <location>
        <position position="238"/>
    </location>
</feature>
<feature type="modified residue" description="Phosphoserine; by DYRK2" evidence="1">
    <location>
        <position position="385"/>
    </location>
</feature>
<feature type="modified residue" description="Phosphoserine" evidence="15">
    <location>
        <position position="707"/>
    </location>
</feature>
<feature type="modified residue" description="Phosphothreonine" evidence="15">
    <location>
        <position position="708"/>
    </location>
</feature>
<feature type="modified residue" description="N6-acetyllysine; by EP300" evidence="1">
    <location>
        <position position="740"/>
    </location>
</feature>
<feature type="modified residue" description="Phosphoserine; by DYRK2" evidence="1">
    <location>
        <position position="997"/>
    </location>
</feature>
<feature type="sequence conflict" description="In Ref. 2; AAH85190." evidence="12" ref="2">
    <original>Y</original>
    <variation>S</variation>
    <location>
        <position position="71"/>
    </location>
</feature>
<reference key="1">
    <citation type="journal article" date="2009" name="PLoS Biol.">
        <title>Lineage-specific biology revealed by a finished genome assembly of the mouse.</title>
        <authorList>
            <person name="Church D.M."/>
            <person name="Goodstadt L."/>
            <person name="Hillier L.W."/>
            <person name="Zody M.C."/>
            <person name="Goldstein S."/>
            <person name="She X."/>
            <person name="Bult C.J."/>
            <person name="Agarwala R."/>
            <person name="Cherry J.L."/>
            <person name="DiCuccio M."/>
            <person name="Hlavina W."/>
            <person name="Kapustin Y."/>
            <person name="Meric P."/>
            <person name="Maglott D."/>
            <person name="Birtle Z."/>
            <person name="Marques A.C."/>
            <person name="Graves T."/>
            <person name="Zhou S."/>
            <person name="Teague B."/>
            <person name="Potamousis K."/>
            <person name="Churas C."/>
            <person name="Place M."/>
            <person name="Herschleb J."/>
            <person name="Runnheim R."/>
            <person name="Forrest D."/>
            <person name="Amos-Landgraf J."/>
            <person name="Schwartz D.C."/>
            <person name="Cheng Z."/>
            <person name="Lindblad-Toh K."/>
            <person name="Eichler E.E."/>
            <person name="Ponting C.P."/>
        </authorList>
    </citation>
    <scope>NUCLEOTIDE SEQUENCE [LARGE SCALE GENOMIC DNA]</scope>
    <source>
        <strain>C57BL/6J</strain>
    </source>
</reference>
<reference key="2">
    <citation type="journal article" date="2004" name="Genome Res.">
        <title>The status, quality, and expansion of the NIH full-length cDNA project: the Mammalian Gene Collection (MGC).</title>
        <authorList>
            <consortium name="The MGC Project Team"/>
        </authorList>
    </citation>
    <scope>NUCLEOTIDE SEQUENCE [LARGE SCALE MRNA]</scope>
    <source>
        <strain>C57BL/6J</strain>
        <tissue>Eye</tissue>
    </source>
</reference>
<reference key="3">
    <citation type="journal article" date="1997" name="Development">
        <title>Specific and redundant functions of Gli2 and Gli3 zinc finger genes in skeletal patterning and development.</title>
        <authorList>
            <person name="Mo R."/>
            <person name="Freer A.M."/>
            <person name="Zinyk D.L."/>
            <person name="Crackower M.A."/>
            <person name="Michaud J."/>
            <person name="Heng H.H."/>
            <person name="Chik K.W."/>
            <person name="Shi X.M."/>
            <person name="Tsui L.C."/>
            <person name="Cheng S.H."/>
            <person name="Joyner A.L."/>
            <person name="Hui C."/>
        </authorList>
    </citation>
    <scope>DISRUPTION PHENOTYPE</scope>
    <scope>FUNCTION</scope>
</reference>
<reference key="4">
    <citation type="journal article" date="1999" name="Development">
        <title>Regulation of Gli2 and Gli3 activities by an amino-terminal repression domain: implication of Gli2 and Gli3 as primary mediators of Shh signaling.</title>
        <authorList>
            <person name="Sasaki H."/>
            <person name="Nishizaki Y."/>
            <person name="Hui C."/>
            <person name="Nakafuku M."/>
            <person name="Kondoh H."/>
        </authorList>
    </citation>
    <scope>FUNCTION</scope>
    <scope>DOMAIN</scope>
</reference>
<reference key="5">
    <citation type="journal article" date="2000" name="Nat. Cell Biol.">
        <title>Gli regulation by the opposing activities of fused and suppressor of fused.</title>
        <authorList>
            <person name="Murone M."/>
            <person name="Luoh S.-L."/>
            <person name="Stone D."/>
            <person name="Li W."/>
            <person name="Gurney A."/>
            <person name="Armanini M."/>
            <person name="Grey C."/>
            <person name="Rosenthal A."/>
            <person name="de Sauvage F.J."/>
        </authorList>
    </citation>
    <scope>FUNCTION</scope>
    <scope>SUBCELLULAR LOCATION</scope>
    <scope>INTERACTION WITH SUFU AND STK36</scope>
</reference>
<reference key="6">
    <citation type="journal article" date="2001" name="J. Biol. Chem.">
        <title>Physical and functional interactions between Zic and Gli proteins.</title>
        <authorList>
            <person name="Koyabu Y."/>
            <person name="Nakata K."/>
            <person name="Mizugishi K."/>
            <person name="Aruga J."/>
            <person name="Mikoshiba K."/>
        </authorList>
    </citation>
    <scope>INTERACTION WITH ZIC1 AND ZIC2</scope>
</reference>
<reference key="7">
    <citation type="journal article" date="2009" name="Mol. Cell. Proteomics">
        <title>Large scale localization of protein phosphorylation by use of electron capture dissociation mass spectrometry.</title>
        <authorList>
            <person name="Sweet S.M."/>
            <person name="Bailey C.M."/>
            <person name="Cunningham D.L."/>
            <person name="Heath J.K."/>
            <person name="Cooper H.J."/>
        </authorList>
    </citation>
    <scope>PHOSPHORYLATION [LARGE SCALE ANALYSIS] AT SER-707 AND THR-708</scope>
    <scope>IDENTIFICATION BY MASS SPECTROMETRY [LARGE SCALE ANALYSIS]</scope>
    <source>
        <tissue>Embryonic fibroblast</tissue>
    </source>
</reference>
<reference key="8">
    <citation type="journal article" date="2012" name="Development">
        <title>Kif7 regulates Gli2 through Sufu-dependent and -independent functions during skin development and tumorigenesis.</title>
        <authorList>
            <person name="Li Z.J."/>
            <person name="Nieuwenhuis E."/>
            <person name="Nien W."/>
            <person name="Zhang X."/>
            <person name="Zhang J."/>
            <person name="Puviindran V."/>
            <person name="Wainwright B.J."/>
            <person name="Kim P.C."/>
            <person name="Hui C.C."/>
        </authorList>
    </citation>
    <scope>INTERACTION WITH SUFU</scope>
    <scope>SUBCELLULAR LOCATION</scope>
</reference>
<reference key="9">
    <citation type="journal article" date="2015" name="Cell Rep.">
        <title>FOXC1 activates smoothened-independent Hedgehog signaling in basal-like breast cancer.</title>
        <authorList>
            <person name="Han B."/>
            <person name="Qu Y."/>
            <person name="Jin Y."/>
            <person name="Yu Y."/>
            <person name="Deng N."/>
            <person name="Wawrowsky K."/>
            <person name="Zhang X."/>
            <person name="Li N."/>
            <person name="Bose S."/>
            <person name="Wang Q."/>
            <person name="Sakkiah S."/>
            <person name="Abrol R."/>
            <person name="Jensen T.W."/>
            <person name="Berman B.P."/>
            <person name="Tanaka H."/>
            <person name="Johnson J."/>
            <person name="Gao B."/>
            <person name="Hao J."/>
            <person name="Liu Z."/>
            <person name="Buttyan R."/>
            <person name="Ray P.S."/>
            <person name="Hung M.C."/>
            <person name="Giuliano A.E."/>
            <person name="Cui X."/>
        </authorList>
    </citation>
    <scope>INTERACTION WITH FOXC1</scope>
</reference>
<reference key="10">
    <citation type="journal article" date="2015" name="Genes Dev.">
        <title>Bifurcating action of Smoothened in Hedgehog signaling is mediated by Dlg5.</title>
        <authorList>
            <person name="Chong Y.C."/>
            <person name="Mann R.K."/>
            <person name="Zhao C."/>
            <person name="Kato M."/>
            <person name="Beachy P.A."/>
        </authorList>
    </citation>
    <scope>SUBCELLULAR LOCATION</scope>
</reference>
<reference key="11">
    <citation type="journal article" date="2015" name="Nat. Commun.">
        <title>The transcription factor Foxc1 is necessary for Ihh-Gli2-regulated endochondral ossification.</title>
        <authorList>
            <person name="Yoshida M."/>
            <person name="Hata K."/>
            <person name="Takashima R."/>
            <person name="Ono K."/>
            <person name="Nakamura E."/>
            <person name="Takahata Y."/>
            <person name="Murakami T."/>
            <person name="Iseki S."/>
            <person name="Takano-Yamamoto T."/>
            <person name="Nishimura R."/>
            <person name="Yoneda T."/>
        </authorList>
    </citation>
    <scope>INTERACTION WITH FOXC1</scope>
</reference>
<organism>
    <name type="scientific">Mus musculus</name>
    <name type="common">Mouse</name>
    <dbReference type="NCBI Taxonomy" id="10090"/>
    <lineage>
        <taxon>Eukaryota</taxon>
        <taxon>Metazoa</taxon>
        <taxon>Chordata</taxon>
        <taxon>Craniata</taxon>
        <taxon>Vertebrata</taxon>
        <taxon>Euteleostomi</taxon>
        <taxon>Mammalia</taxon>
        <taxon>Eutheria</taxon>
        <taxon>Euarchontoglires</taxon>
        <taxon>Glires</taxon>
        <taxon>Rodentia</taxon>
        <taxon>Myomorpha</taxon>
        <taxon>Muroidea</taxon>
        <taxon>Muridae</taxon>
        <taxon>Murinae</taxon>
        <taxon>Mus</taxon>
        <taxon>Mus</taxon>
    </lineage>
</organism>
<gene>
    <name evidence="14" type="primary">Gli2</name>
    <name evidence="1" type="synonym">Thp</name>
</gene>
<dbReference type="EMBL" id="AC109271">
    <property type="status" value="NOT_ANNOTATED_CDS"/>
    <property type="molecule type" value="Genomic_DNA"/>
</dbReference>
<dbReference type="EMBL" id="AC122287">
    <property type="status" value="NOT_ANNOTATED_CDS"/>
    <property type="molecule type" value="Genomic_DNA"/>
</dbReference>
<dbReference type="EMBL" id="AC132589">
    <property type="status" value="NOT_ANNOTATED_CDS"/>
    <property type="molecule type" value="Genomic_DNA"/>
</dbReference>
<dbReference type="EMBL" id="BC085190">
    <property type="protein sequence ID" value="AAH85190.1"/>
    <property type="molecule type" value="mRNA"/>
</dbReference>
<dbReference type="CCDS" id="CCDS35692.1"/>
<dbReference type="RefSeq" id="NP_001074594.1">
    <property type="nucleotide sequence ID" value="NM_001081125.1"/>
</dbReference>
<dbReference type="RefSeq" id="XP_030104138.1">
    <property type="nucleotide sequence ID" value="XM_030248278.2"/>
</dbReference>
<dbReference type="SMR" id="Q0VGT2"/>
<dbReference type="BioGRID" id="199943">
    <property type="interactions" value="47"/>
</dbReference>
<dbReference type="ComplexPortal" id="CPX-149">
    <property type="entry name" value="GLI2-SUFU complex"/>
</dbReference>
<dbReference type="CORUM" id="Q0VGT2"/>
<dbReference type="DIP" id="DIP-60772N"/>
<dbReference type="ELM" id="Q0VGT2"/>
<dbReference type="FunCoup" id="Q0VGT2">
    <property type="interactions" value="1250"/>
</dbReference>
<dbReference type="IntAct" id="Q0VGT2">
    <property type="interactions" value="2"/>
</dbReference>
<dbReference type="STRING" id="10090.ENSMUSP00000054837"/>
<dbReference type="BindingDB" id="Q0VGT2"/>
<dbReference type="ChEMBL" id="CHEMBL4523629"/>
<dbReference type="GlyGen" id="Q0VGT2">
    <property type="glycosylation" value="3 sites, 1 O-linked glycan (1 site)"/>
</dbReference>
<dbReference type="iPTMnet" id="Q0VGT2"/>
<dbReference type="PhosphoSitePlus" id="Q0VGT2"/>
<dbReference type="PaxDb" id="10090-ENSMUSP00000054837"/>
<dbReference type="PeptideAtlas" id="Q0VGT2"/>
<dbReference type="ProteomicsDB" id="268833"/>
<dbReference type="Pumba" id="Q0VGT2"/>
<dbReference type="Antibodypedia" id="3768">
    <property type="antibodies" value="344 antibodies from 38 providers"/>
</dbReference>
<dbReference type="Ensembl" id="ENSMUST00000062483.15">
    <property type="protein sequence ID" value="ENSMUSP00000054837.9"/>
    <property type="gene ID" value="ENSMUSG00000048402.15"/>
</dbReference>
<dbReference type="GeneID" id="14633"/>
<dbReference type="KEGG" id="mmu:14633"/>
<dbReference type="UCSC" id="uc007cim.1">
    <property type="organism name" value="mouse"/>
</dbReference>
<dbReference type="AGR" id="MGI:95728"/>
<dbReference type="CTD" id="2736"/>
<dbReference type="MGI" id="MGI:95728">
    <property type="gene designation" value="Gli2"/>
</dbReference>
<dbReference type="VEuPathDB" id="HostDB:ENSMUSG00000048402"/>
<dbReference type="eggNOG" id="KOG1721">
    <property type="taxonomic scope" value="Eukaryota"/>
</dbReference>
<dbReference type="GeneTree" id="ENSGT00940000159213"/>
<dbReference type="HOGENOM" id="CLU_003666_2_0_1"/>
<dbReference type="InParanoid" id="Q0VGT2"/>
<dbReference type="OMA" id="VIYETSC"/>
<dbReference type="OrthoDB" id="3214149at2759"/>
<dbReference type="PhylomeDB" id="Q0VGT2"/>
<dbReference type="TreeFam" id="TF350216"/>
<dbReference type="Reactome" id="R-MMU-5610787">
    <property type="pathway name" value="Hedgehog 'off' state"/>
</dbReference>
<dbReference type="Reactome" id="R-MMU-5632684">
    <property type="pathway name" value="Hedgehog 'on' state"/>
</dbReference>
<dbReference type="BioGRID-ORCS" id="14633">
    <property type="hits" value="2 hits in 80 CRISPR screens"/>
</dbReference>
<dbReference type="ChiTaRS" id="Gli2">
    <property type="organism name" value="mouse"/>
</dbReference>
<dbReference type="PRO" id="PR:Q0VGT2"/>
<dbReference type="Proteomes" id="UP000000589">
    <property type="component" value="Chromosome 1"/>
</dbReference>
<dbReference type="RNAct" id="Q0VGT2">
    <property type="molecule type" value="protein"/>
</dbReference>
<dbReference type="Bgee" id="ENSMUSG00000048402">
    <property type="expression patterns" value="Expressed in spermatogonium and 277 other cell types or tissues"/>
</dbReference>
<dbReference type="ExpressionAtlas" id="Q0VGT2">
    <property type="expression patterns" value="baseline and differential"/>
</dbReference>
<dbReference type="GO" id="GO:0005930">
    <property type="term" value="C:axoneme"/>
    <property type="evidence" value="ECO:0000314"/>
    <property type="project" value="CACAO"/>
</dbReference>
<dbReference type="GO" id="GO:0005813">
    <property type="term" value="C:centrosome"/>
    <property type="evidence" value="ECO:0007669"/>
    <property type="project" value="Ensembl"/>
</dbReference>
<dbReference type="GO" id="GO:0036064">
    <property type="term" value="C:ciliary basal body"/>
    <property type="evidence" value="ECO:0007669"/>
    <property type="project" value="Ensembl"/>
</dbReference>
<dbReference type="GO" id="GO:0097542">
    <property type="term" value="C:ciliary tip"/>
    <property type="evidence" value="ECO:0000314"/>
    <property type="project" value="MGI"/>
</dbReference>
<dbReference type="GO" id="GO:0005929">
    <property type="term" value="C:cilium"/>
    <property type="evidence" value="ECO:0000314"/>
    <property type="project" value="UniProtKB"/>
</dbReference>
<dbReference type="GO" id="GO:0005737">
    <property type="term" value="C:cytoplasm"/>
    <property type="evidence" value="ECO:0000314"/>
    <property type="project" value="MGI"/>
</dbReference>
<dbReference type="GO" id="GO:0005829">
    <property type="term" value="C:cytosol"/>
    <property type="evidence" value="ECO:0000304"/>
    <property type="project" value="Reactome"/>
</dbReference>
<dbReference type="GO" id="GO:1990788">
    <property type="term" value="C:GLI-SUFU complex"/>
    <property type="evidence" value="ECO:0000250"/>
    <property type="project" value="ComplexPortal"/>
</dbReference>
<dbReference type="GO" id="GO:0016020">
    <property type="term" value="C:membrane"/>
    <property type="evidence" value="ECO:0000314"/>
    <property type="project" value="MGI"/>
</dbReference>
<dbReference type="GO" id="GO:0031514">
    <property type="term" value="C:motile cilium"/>
    <property type="evidence" value="ECO:0000314"/>
    <property type="project" value="MGI"/>
</dbReference>
<dbReference type="GO" id="GO:0016607">
    <property type="term" value="C:nuclear speck"/>
    <property type="evidence" value="ECO:0000314"/>
    <property type="project" value="MGI"/>
</dbReference>
<dbReference type="GO" id="GO:0005730">
    <property type="term" value="C:nucleolus"/>
    <property type="evidence" value="ECO:0007669"/>
    <property type="project" value="Ensembl"/>
</dbReference>
<dbReference type="GO" id="GO:0005654">
    <property type="term" value="C:nucleoplasm"/>
    <property type="evidence" value="ECO:0000304"/>
    <property type="project" value="Reactome"/>
</dbReference>
<dbReference type="GO" id="GO:0005634">
    <property type="term" value="C:nucleus"/>
    <property type="evidence" value="ECO:0000314"/>
    <property type="project" value="UniProtKB"/>
</dbReference>
<dbReference type="GO" id="GO:0003682">
    <property type="term" value="F:chromatin binding"/>
    <property type="evidence" value="ECO:0000314"/>
    <property type="project" value="MGI"/>
</dbReference>
<dbReference type="GO" id="GO:0031490">
    <property type="term" value="F:chromatin DNA binding"/>
    <property type="evidence" value="ECO:0000314"/>
    <property type="project" value="MGI"/>
</dbReference>
<dbReference type="GO" id="GO:0001228">
    <property type="term" value="F:DNA-binding transcription activator activity, RNA polymerase II-specific"/>
    <property type="evidence" value="ECO:0000314"/>
    <property type="project" value="NTNU_SB"/>
</dbReference>
<dbReference type="GO" id="GO:0003700">
    <property type="term" value="F:DNA-binding transcription factor activity"/>
    <property type="evidence" value="ECO:0000314"/>
    <property type="project" value="MGI"/>
</dbReference>
<dbReference type="GO" id="GO:1990841">
    <property type="term" value="F:promoter-specific chromatin binding"/>
    <property type="evidence" value="ECO:0000314"/>
    <property type="project" value="UniProtKB"/>
</dbReference>
<dbReference type="GO" id="GO:0000978">
    <property type="term" value="F:RNA polymerase II cis-regulatory region sequence-specific DNA binding"/>
    <property type="evidence" value="ECO:0000314"/>
    <property type="project" value="NTNU_SB"/>
</dbReference>
<dbReference type="GO" id="GO:0043565">
    <property type="term" value="F:sequence-specific DNA binding"/>
    <property type="evidence" value="ECO:0000314"/>
    <property type="project" value="MGI"/>
</dbReference>
<dbReference type="GO" id="GO:0000976">
    <property type="term" value="F:transcription cis-regulatory region binding"/>
    <property type="evidence" value="ECO:0000314"/>
    <property type="project" value="MGI"/>
</dbReference>
<dbReference type="GO" id="GO:0008270">
    <property type="term" value="F:zinc ion binding"/>
    <property type="evidence" value="ECO:0007669"/>
    <property type="project" value="UniProtKB-KW"/>
</dbReference>
<dbReference type="GO" id="GO:0048646">
    <property type="term" value="P:anatomical structure formation involved in morphogenesis"/>
    <property type="evidence" value="ECO:0000316"/>
    <property type="project" value="MGI"/>
</dbReference>
<dbReference type="GO" id="GO:0009952">
    <property type="term" value="P:anterior/posterior pattern specification"/>
    <property type="evidence" value="ECO:0000316"/>
    <property type="project" value="MGI"/>
</dbReference>
<dbReference type="GO" id="GO:0007411">
    <property type="term" value="P:axon guidance"/>
    <property type="evidence" value="ECO:0000315"/>
    <property type="project" value="MGI"/>
</dbReference>
<dbReference type="GO" id="GO:0048754">
    <property type="term" value="P:branching morphogenesis of an epithelial tube"/>
    <property type="evidence" value="ECO:0000315"/>
    <property type="project" value="MGI"/>
</dbReference>
<dbReference type="GO" id="GO:0030154">
    <property type="term" value="P:cell differentiation"/>
    <property type="evidence" value="ECO:0000315"/>
    <property type="project" value="MGI"/>
</dbReference>
<dbReference type="GO" id="GO:0008283">
    <property type="term" value="P:cell population proliferation"/>
    <property type="evidence" value="ECO:0000315"/>
    <property type="project" value="MGI"/>
</dbReference>
<dbReference type="GO" id="GO:0021696">
    <property type="term" value="P:cerebellar cortex morphogenesis"/>
    <property type="evidence" value="ECO:0000315"/>
    <property type="project" value="MGI"/>
</dbReference>
<dbReference type="GO" id="GO:0002062">
    <property type="term" value="P:chondrocyte differentiation"/>
    <property type="evidence" value="ECO:0000316"/>
    <property type="project" value="MGI"/>
</dbReference>
<dbReference type="GO" id="GO:0090103">
    <property type="term" value="P:cochlea morphogenesis"/>
    <property type="evidence" value="ECO:0000315"/>
    <property type="project" value="MGI"/>
</dbReference>
<dbReference type="GO" id="GO:0048589">
    <property type="term" value="P:developmental growth"/>
    <property type="evidence" value="ECO:0000315"/>
    <property type="project" value="MGI"/>
</dbReference>
<dbReference type="GO" id="GO:0021904">
    <property type="term" value="P:dorsal/ventral neural tube patterning"/>
    <property type="evidence" value="ECO:0000314"/>
    <property type="project" value="MGI"/>
</dbReference>
<dbReference type="GO" id="GO:0009953">
    <property type="term" value="P:dorsal/ventral pattern formation"/>
    <property type="evidence" value="ECO:0000316"/>
    <property type="project" value="MGI"/>
</dbReference>
<dbReference type="GO" id="GO:0048566">
    <property type="term" value="P:embryonic digestive tract development"/>
    <property type="evidence" value="ECO:0000315"/>
    <property type="project" value="MGI"/>
</dbReference>
<dbReference type="GO" id="GO:0042733">
    <property type="term" value="P:embryonic digit morphogenesis"/>
    <property type="evidence" value="ECO:0000315"/>
    <property type="project" value="MGI"/>
</dbReference>
<dbReference type="GO" id="GO:0050673">
    <property type="term" value="P:epithelial cell proliferation"/>
    <property type="evidence" value="ECO:0000315"/>
    <property type="project" value="MGI"/>
</dbReference>
<dbReference type="GO" id="GO:0021508">
    <property type="term" value="P:floor plate formation"/>
    <property type="evidence" value="ECO:0000315"/>
    <property type="project" value="MGI"/>
</dbReference>
<dbReference type="GO" id="GO:0010467">
    <property type="term" value="P:gene expression"/>
    <property type="evidence" value="ECO:0000315"/>
    <property type="project" value="MGI"/>
</dbReference>
<dbReference type="GO" id="GO:0060322">
    <property type="term" value="P:head development"/>
    <property type="evidence" value="ECO:0000315"/>
    <property type="project" value="MGI"/>
</dbReference>
<dbReference type="GO" id="GO:0007507">
    <property type="term" value="P:heart development"/>
    <property type="evidence" value="ECO:0000316"/>
    <property type="project" value="MGI"/>
</dbReference>
<dbReference type="GO" id="GO:0030902">
    <property type="term" value="P:hindbrain development"/>
    <property type="evidence" value="ECO:0000315"/>
    <property type="project" value="MGI"/>
</dbReference>
<dbReference type="GO" id="GO:0007442">
    <property type="term" value="P:hindgut morphogenesis"/>
    <property type="evidence" value="ECO:0000315"/>
    <property type="project" value="MGI"/>
</dbReference>
<dbReference type="GO" id="GO:0001701">
    <property type="term" value="P:in utero embryonic development"/>
    <property type="evidence" value="ECO:0000315"/>
    <property type="project" value="MGI"/>
</dbReference>
<dbReference type="GO" id="GO:0001822">
    <property type="term" value="P:kidney development"/>
    <property type="evidence" value="ECO:0000316"/>
    <property type="project" value="MGI"/>
</dbReference>
<dbReference type="GO" id="GO:0030324">
    <property type="term" value="P:lung development"/>
    <property type="evidence" value="ECO:0000315"/>
    <property type="project" value="MGI"/>
</dbReference>
<dbReference type="GO" id="GO:0030879">
    <property type="term" value="P:mammary gland development"/>
    <property type="evidence" value="ECO:0000315"/>
    <property type="project" value="MGI"/>
</dbReference>
<dbReference type="GO" id="GO:0060603">
    <property type="term" value="P:mammary gland duct morphogenesis"/>
    <property type="evidence" value="ECO:0000315"/>
    <property type="project" value="MGI"/>
</dbReference>
<dbReference type="GO" id="GO:0002009">
    <property type="term" value="P:morphogenesis of an epithelium"/>
    <property type="evidence" value="ECO:0000315"/>
    <property type="project" value="MGI"/>
</dbReference>
<dbReference type="GO" id="GO:0043066">
    <property type="term" value="P:negative regulation of apoptotic process"/>
    <property type="evidence" value="ECO:0000314"/>
    <property type="project" value="MGI"/>
</dbReference>
<dbReference type="GO" id="GO:0032331">
    <property type="term" value="P:negative regulation of chondrocyte differentiation"/>
    <property type="evidence" value="ECO:0000315"/>
    <property type="project" value="MGI"/>
</dbReference>
<dbReference type="GO" id="GO:0045879">
    <property type="term" value="P:negative regulation of smoothened signaling pathway"/>
    <property type="evidence" value="ECO:0000316"/>
    <property type="project" value="MGI"/>
</dbReference>
<dbReference type="GO" id="GO:0000122">
    <property type="term" value="P:negative regulation of transcription by RNA polymerase II"/>
    <property type="evidence" value="ECO:0000316"/>
    <property type="project" value="MGI"/>
</dbReference>
<dbReference type="GO" id="GO:0021915">
    <property type="term" value="P:neural tube development"/>
    <property type="evidence" value="ECO:0000315"/>
    <property type="project" value="MGI"/>
</dbReference>
<dbReference type="GO" id="GO:0048666">
    <property type="term" value="P:neuron development"/>
    <property type="evidence" value="ECO:0000315"/>
    <property type="project" value="MGI"/>
</dbReference>
<dbReference type="GO" id="GO:0030182">
    <property type="term" value="P:neuron differentiation"/>
    <property type="evidence" value="ECO:0000316"/>
    <property type="project" value="MGI"/>
</dbReference>
<dbReference type="GO" id="GO:0060032">
    <property type="term" value="P:notochord regression"/>
    <property type="evidence" value="ECO:0000316"/>
    <property type="project" value="MGI"/>
</dbReference>
<dbReference type="GO" id="GO:0042475">
    <property type="term" value="P:odontogenesis of dentin-containing tooth"/>
    <property type="evidence" value="ECO:0000315"/>
    <property type="project" value="MGI"/>
</dbReference>
<dbReference type="GO" id="GO:0002076">
    <property type="term" value="P:osteoblast development"/>
    <property type="evidence" value="ECO:0000314"/>
    <property type="project" value="MGI"/>
</dbReference>
<dbReference type="GO" id="GO:0001649">
    <property type="term" value="P:osteoblast differentiation"/>
    <property type="evidence" value="ECO:0000316"/>
    <property type="project" value="MGI"/>
</dbReference>
<dbReference type="GO" id="GO:0007389">
    <property type="term" value="P:pattern specification process"/>
    <property type="evidence" value="ECO:0000315"/>
    <property type="project" value="MGI"/>
</dbReference>
<dbReference type="GO" id="GO:0021983">
    <property type="term" value="P:pituitary gland development"/>
    <property type="evidence" value="ECO:0000316"/>
    <property type="project" value="MGI"/>
</dbReference>
<dbReference type="GO" id="GO:0008284">
    <property type="term" value="P:positive regulation of cell population proliferation"/>
    <property type="evidence" value="ECO:0000315"/>
    <property type="project" value="MGI"/>
</dbReference>
<dbReference type="GO" id="GO:0045893">
    <property type="term" value="P:positive regulation of DNA-templated transcription"/>
    <property type="evidence" value="ECO:0000314"/>
    <property type="project" value="CACAO"/>
</dbReference>
<dbReference type="GO" id="GO:0050679">
    <property type="term" value="P:positive regulation of epithelial cell proliferation"/>
    <property type="evidence" value="ECO:0000315"/>
    <property type="project" value="MGI"/>
</dbReference>
<dbReference type="GO" id="GO:0045666">
    <property type="term" value="P:positive regulation of neuron differentiation"/>
    <property type="evidence" value="ECO:0000316"/>
    <property type="project" value="MGI"/>
</dbReference>
<dbReference type="GO" id="GO:2000648">
    <property type="term" value="P:positive regulation of stem cell proliferation"/>
    <property type="evidence" value="ECO:0000315"/>
    <property type="project" value="MGI"/>
</dbReference>
<dbReference type="GO" id="GO:0045944">
    <property type="term" value="P:positive regulation of transcription by RNA polymerase II"/>
    <property type="evidence" value="ECO:0000314"/>
    <property type="project" value="NTNU_SB"/>
</dbReference>
<dbReference type="GO" id="GO:0060513">
    <property type="term" value="P:prostatic bud formation"/>
    <property type="evidence" value="ECO:0000315"/>
    <property type="project" value="MGI"/>
</dbReference>
<dbReference type="GO" id="GO:0009954">
    <property type="term" value="P:proximal/distal pattern formation"/>
    <property type="evidence" value="ECO:0000316"/>
    <property type="project" value="MGI"/>
</dbReference>
<dbReference type="GO" id="GO:0006355">
    <property type="term" value="P:regulation of DNA-templated transcription"/>
    <property type="evidence" value="ECO:0000250"/>
    <property type="project" value="ComplexPortal"/>
</dbReference>
<dbReference type="GO" id="GO:0008589">
    <property type="term" value="P:regulation of smoothened signaling pathway"/>
    <property type="evidence" value="ECO:0000316"/>
    <property type="project" value="MGI"/>
</dbReference>
<dbReference type="GO" id="GO:0001501">
    <property type="term" value="P:skeletal system development"/>
    <property type="evidence" value="ECO:0000315"/>
    <property type="project" value="MGI"/>
</dbReference>
<dbReference type="GO" id="GO:0007224">
    <property type="term" value="P:smoothened signaling pathway"/>
    <property type="evidence" value="ECO:0000315"/>
    <property type="project" value="MGI"/>
</dbReference>
<dbReference type="GO" id="GO:0060831">
    <property type="term" value="P:smoothened signaling pathway involved in dorsal/ventral neural tube patterning"/>
    <property type="evidence" value="ECO:0000316"/>
    <property type="project" value="MGI"/>
</dbReference>
<dbReference type="GO" id="GO:0021776">
    <property type="term" value="P:smoothened signaling pathway involved in spinal cord motor neuron cell fate specification"/>
    <property type="evidence" value="ECO:0000316"/>
    <property type="project" value="MGI"/>
</dbReference>
<dbReference type="GO" id="GO:0021775">
    <property type="term" value="P:smoothened signaling pathway involved in ventral spinal cord interneuron specification"/>
    <property type="evidence" value="ECO:0000316"/>
    <property type="project" value="MGI"/>
</dbReference>
<dbReference type="GO" id="GO:0021513">
    <property type="term" value="P:spinal cord dorsal/ventral patterning"/>
    <property type="evidence" value="ECO:0000315"/>
    <property type="project" value="MGI"/>
</dbReference>
<dbReference type="GO" id="GO:0021522">
    <property type="term" value="P:spinal cord motor neuron differentiation"/>
    <property type="evidence" value="ECO:0000315"/>
    <property type="project" value="MGI"/>
</dbReference>
<dbReference type="GO" id="GO:0021965">
    <property type="term" value="P:spinal cord ventral commissure morphogenesis"/>
    <property type="evidence" value="ECO:0000315"/>
    <property type="project" value="MGI"/>
</dbReference>
<dbReference type="GO" id="GO:0072089">
    <property type="term" value="P:stem cell proliferation"/>
    <property type="evidence" value="ECO:0000315"/>
    <property type="project" value="MGI"/>
</dbReference>
<dbReference type="GO" id="GO:0035295">
    <property type="term" value="P:tube development"/>
    <property type="evidence" value="ECO:0000316"/>
    <property type="project" value="MGI"/>
</dbReference>
<dbReference type="GO" id="GO:0007418">
    <property type="term" value="P:ventral midline development"/>
    <property type="evidence" value="ECO:0000315"/>
    <property type="project" value="MGI"/>
</dbReference>
<dbReference type="GO" id="GO:0021517">
    <property type="term" value="P:ventral spinal cord development"/>
    <property type="evidence" value="ECO:0000315"/>
    <property type="project" value="MGI"/>
</dbReference>
<dbReference type="FunFam" id="3.30.160.60:FF:000019">
    <property type="entry name" value="GLI family zinc finger 3"/>
    <property type="match status" value="1"/>
</dbReference>
<dbReference type="FunFam" id="3.30.160.60:FF:000031">
    <property type="entry name" value="GLI family zinc finger 3"/>
    <property type="match status" value="1"/>
</dbReference>
<dbReference type="FunFam" id="3.30.160.60:FF:000036">
    <property type="entry name" value="GLI family zinc finger 3"/>
    <property type="match status" value="1"/>
</dbReference>
<dbReference type="FunFam" id="3.30.160.60:FF:000048">
    <property type="entry name" value="GLI family zinc finger 3"/>
    <property type="match status" value="1"/>
</dbReference>
<dbReference type="FunFam" id="3.30.160.60:FF:000068">
    <property type="entry name" value="GLI family zinc finger 3"/>
    <property type="match status" value="1"/>
</dbReference>
<dbReference type="Gene3D" id="3.30.160.60">
    <property type="entry name" value="Classic Zinc Finger"/>
    <property type="match status" value="5"/>
</dbReference>
<dbReference type="InterPro" id="IPR043359">
    <property type="entry name" value="GLI-like"/>
</dbReference>
<dbReference type="InterPro" id="IPR056436">
    <property type="entry name" value="Znf-C2H2_ZIC1-5/GLI1-3-like"/>
</dbReference>
<dbReference type="InterPro" id="IPR036236">
    <property type="entry name" value="Znf_C2H2_sf"/>
</dbReference>
<dbReference type="InterPro" id="IPR013087">
    <property type="entry name" value="Znf_C2H2_type"/>
</dbReference>
<dbReference type="PANTHER" id="PTHR45718">
    <property type="entry name" value="TRANSCRIPTIONAL ACTIVATOR CUBITUS INTERRUPTUS"/>
    <property type="match status" value="1"/>
</dbReference>
<dbReference type="PANTHER" id="PTHR45718:SF6">
    <property type="entry name" value="ZINC FINGER PROTEIN GLI2"/>
    <property type="match status" value="1"/>
</dbReference>
<dbReference type="Pfam" id="PF00096">
    <property type="entry name" value="zf-C2H2"/>
    <property type="match status" value="2"/>
</dbReference>
<dbReference type="Pfam" id="PF23561">
    <property type="entry name" value="zf-C2H2_15"/>
    <property type="match status" value="1"/>
</dbReference>
<dbReference type="SMART" id="SM00355">
    <property type="entry name" value="ZnF_C2H2"/>
    <property type="match status" value="5"/>
</dbReference>
<dbReference type="SUPFAM" id="SSF57667">
    <property type="entry name" value="beta-beta-alpha zinc fingers"/>
    <property type="match status" value="3"/>
</dbReference>
<dbReference type="PROSITE" id="PS00028">
    <property type="entry name" value="ZINC_FINGER_C2H2_1"/>
    <property type="match status" value="4"/>
</dbReference>
<dbReference type="PROSITE" id="PS50157">
    <property type="entry name" value="ZINC_FINGER_C2H2_2"/>
    <property type="match status" value="4"/>
</dbReference>
<sequence>METSAPAPALEKKEAKSGLLEDSSFPDPGKKACPLAVAAAVAAHGVPQQLLPAFHAPLPIDMRHQEGRYHYDPHSVHSVHGPPTLSGSPVISDISLIRLSPHPAGPGESPFSAHHPYVNPHMEHYLRSVHSSPTLSMISAARGLSPADVAHEHLKERGLFSLAAPGTNPSDYYHQMTLMASHPTPYGDLLMQSGGAASAPHLHDYLNPVDASRFSSPRVTPRLSRKRALSISPLSDASLDLQRMIRTSPNSLVAYINNSRSSSAASGSYGHLSAGALSPAFTFPHPINPVAYQQILSQQRGLGSAFGHTPPLIQPSPTFLAQQPMTLTSISTMPTQLSSSSSNCLNDANQNKQNSESAVSSTVNPITIHKRSKVKTEAEGLRPASPLGLTQEQLADLKEDLDRDDCKQEAEVVIYETNCHWADCTKEYDTQEQLVHHINNEHIHGEKKEFVCRWQACTREQKPFKAQYMLVVHMRRHTGEKPHKCTFEGCSKAYSRLENLKTHLRSHTGEKPYVCEHEGCNKAFSNASDRAKHQNRTHSNEKPYICKIPGCTKRYTDPSSLRKHVKTVHGPDAHVTKKQRNDVHVRAPLLKENGDNEASAEPGGRGPEESVEASSTSHTVEDCLHIKAIKTESSGLCQSSPGAQSSCSSEPSPLGSAPNNDSGMEMPGTGPGSLGDLTALADTCPGADTSALAAPSTGGLQLRKHMSTVHRFEQLKREKLKSLKDSCSWAGPAPHTRNTKLPPLPVNGSVLENFNNTGGGGPAGLLPSQRLPELTEVTMLSQLQERRDSSTSTMSSAYTVSRRSSGISPYFSSRRSSEASPLGGLRPHNASSADSYDPISTDASRRSSEASQCSGGGPGLLNLTPAQQYNLRAKYAAATGGPPPTPLPGLDRVSLRTRLALLDAPERALPGACPHPLGPRRGSDGPTYSHGHGHGYAGAAPAFPHEGPNSSTRRASDPVRRPDPLILPRVQRFHSTHNMNPGSLPPCADRRGLHVQSHPSVDSNLTRNAYSPRPPSINENVVMEAVAAGVDGPGLECDLGLVEDELVLPDDVVQYIKAHTGGTLDDGIRQGYPTEGTGFPENSKLPSPGLQGHRRLAAADSNMGPSAPGLGGCQLSYSPSSNLNKSNMPVQWNEVSSGTVDALPTQVKPPPFPHSNLAVVQQKPAFGQYPGYNPQSVQSSSGGLDSTQPHLQLRGAPSASRGSYTQQPRQPAAGSQCLGMSAAMSPQASYSQAHPQLSPNIVSGSLNQFSPSCSNMAAKPSHLGLPQQMEVVPNATIMNGHQREHGVPNSSLAAVSQPHPVLSYPQQDSYQQGSNLLSSHQPGFMESQQNAGFGLMQPRPPLEPNTASRHRGVRSGQQQLYARTTGQAMVTSANQETAEAMPKGPAGTMVSLAPQPSQDTGRAQDQNTLYYYGQIHMYEQNGGCPAVQPQPPQPQACSDSIQPEPLPSPGVNQVSSTVDSQLLEPPQIDFDAIMDDGDHSSLFSGALSPTLLHNLSQNSSRLTTPRNSLTLPSIPAGISNMAVGDMSSMLTSLAEESKFLNMMT</sequence>
<keyword id="KW-0007">Acetylation</keyword>
<keyword id="KW-0010">Activator</keyword>
<keyword id="KW-0966">Cell projection</keyword>
<keyword id="KW-0969">Cilium</keyword>
<keyword id="KW-0963">Cytoplasm</keyword>
<keyword id="KW-0217">Developmental protein</keyword>
<keyword id="KW-0238">DNA-binding</keyword>
<keyword id="KW-0479">Metal-binding</keyword>
<keyword id="KW-0539">Nucleus</keyword>
<keyword id="KW-0597">Phosphoprotein</keyword>
<keyword id="KW-1185">Reference proteome</keyword>
<keyword id="KW-0677">Repeat</keyword>
<keyword id="KW-0678">Repressor</keyword>
<keyword id="KW-0804">Transcription</keyword>
<keyword id="KW-0805">Transcription regulation</keyword>
<keyword id="KW-0862">Zinc</keyword>
<keyword id="KW-0863">Zinc-finger</keyword>
<protein>
    <recommendedName>
        <fullName evidence="12">Zinc finger protein GLI2</fullName>
    </recommendedName>
    <alternativeName>
        <fullName evidence="1">Tax helper protein</fullName>
    </alternativeName>
</protein>